<gene>
    <name type="primary">PJA2</name>
</gene>
<organism>
    <name type="scientific">Pongo abelii</name>
    <name type="common">Sumatran orangutan</name>
    <name type="synonym">Pongo pygmaeus abelii</name>
    <dbReference type="NCBI Taxonomy" id="9601"/>
    <lineage>
        <taxon>Eukaryota</taxon>
        <taxon>Metazoa</taxon>
        <taxon>Chordata</taxon>
        <taxon>Craniata</taxon>
        <taxon>Vertebrata</taxon>
        <taxon>Euteleostomi</taxon>
        <taxon>Mammalia</taxon>
        <taxon>Eutheria</taxon>
        <taxon>Euarchontoglires</taxon>
        <taxon>Primates</taxon>
        <taxon>Haplorrhini</taxon>
        <taxon>Catarrhini</taxon>
        <taxon>Hominidae</taxon>
        <taxon>Pongo</taxon>
    </lineage>
</organism>
<comment type="function">
    <text evidence="2">Has E2-dependent E3 ubiquitin-protein ligase activity. Responsible for ubiquitination of cAMP-dependent protein kinase type I and type II-alpha/beta regulatory subunits and for targeting them for proteasomal degradation. Essential for PKA-mediated long-term memory processes. Through the ubiquitination of MFHAS1, positively regulates the TLR2 signaling pathway that leads to the activation of the downstream p38 and JNK MAP kinases and promotes the polarization of macrophages toward the pro-inflammatory M1 phenotype. Plays a role in ciliogenesis by ubiquitinating OFD1.</text>
</comment>
<comment type="catalytic activity">
    <reaction evidence="2">
        <text>S-ubiquitinyl-[E2 ubiquitin-conjugating enzyme]-L-cysteine + [acceptor protein]-L-lysine = [E2 ubiquitin-conjugating enzyme]-L-cysteine + N(6)-ubiquitinyl-[acceptor protein]-L-lysine.</text>
        <dbReference type="EC" id="2.3.2.27"/>
    </reaction>
</comment>
<comment type="pathway">
    <text evidence="2">Protein modification; protein ubiquitination.</text>
</comment>
<comment type="subunit">
    <text evidence="2">Binds ubiquitin-conjugating enzymes (E2s). In vitro, interacts with the ubiquitin-conjugating enzyme, UBE2D2. The phosphorylated form interacts with PRKAR1A, PRKAR2A and PRKAR2B. Binds the catalytic subunits of cAMP-dependent protein kinase. Interacts with MFHAS1. Interacts with TBC1D31; the interaction is direct and recruits PJA2 to centrosomes.</text>
</comment>
<comment type="subcellular location">
    <subcellularLocation>
        <location evidence="2">Cytoplasm</location>
    </subcellularLocation>
    <subcellularLocation>
        <location evidence="2">Cell membrane</location>
    </subcellularLocation>
    <subcellularLocation>
        <location evidence="2">Endoplasmic reticulum membrane</location>
        <topology evidence="2">Peripheral membrane protein</topology>
    </subcellularLocation>
    <subcellularLocation>
        <location evidence="2">Golgi apparatus membrane</location>
        <topology evidence="2">Peripheral membrane protein</topology>
    </subcellularLocation>
    <subcellularLocation>
        <location evidence="3">Synapse</location>
    </subcellularLocation>
    <subcellularLocation>
        <location evidence="3">Postsynaptic density</location>
    </subcellularLocation>
    <subcellularLocation>
        <location evidence="2">Cytoplasm</location>
        <location evidence="2">Cytoskeleton</location>
        <location evidence="2">Microtubule organizing center</location>
        <location evidence="2">Centrosome</location>
    </subcellularLocation>
    <text evidence="2 3">Localizes at the cytoplasmic side of endoplasmic reticulum and Golgi apparatus (By similarity). Expressed in the postsynaptic density region of synapses (By similarity). Colocalizes with PRKAR2A and PRKAR2B in the cytoplasm and the cell membrane (By similarity).</text>
</comment>
<protein>
    <recommendedName>
        <fullName>E3 ubiquitin-protein ligase Praja-2</fullName>
        <shortName>Praja2</shortName>
        <ecNumber evidence="2">2.3.2.27</ecNumber>
    </recommendedName>
    <alternativeName>
        <fullName evidence="6">RING-type E3 ubiquitin transferase Praja-2</fullName>
    </alternativeName>
</protein>
<evidence type="ECO:0000250" key="1"/>
<evidence type="ECO:0000250" key="2">
    <source>
        <dbReference type="UniProtKB" id="O43164"/>
    </source>
</evidence>
<evidence type="ECO:0000250" key="3">
    <source>
        <dbReference type="UniProtKB" id="Q63364"/>
    </source>
</evidence>
<evidence type="ECO:0000255" key="4">
    <source>
        <dbReference type="PROSITE-ProRule" id="PRU00175"/>
    </source>
</evidence>
<evidence type="ECO:0000256" key="5">
    <source>
        <dbReference type="SAM" id="MobiDB-lite"/>
    </source>
</evidence>
<evidence type="ECO:0000305" key="6"/>
<keyword id="KW-0007">Acetylation</keyword>
<keyword id="KW-1003">Cell membrane</keyword>
<keyword id="KW-0963">Cytoplasm</keyword>
<keyword id="KW-0206">Cytoskeleton</keyword>
<keyword id="KW-0256">Endoplasmic reticulum</keyword>
<keyword id="KW-0333">Golgi apparatus</keyword>
<keyword id="KW-0472">Membrane</keyword>
<keyword id="KW-0479">Metal-binding</keyword>
<keyword id="KW-0597">Phosphoprotein</keyword>
<keyword id="KW-1185">Reference proteome</keyword>
<keyword id="KW-0770">Synapse</keyword>
<keyword id="KW-0808">Transferase</keyword>
<keyword id="KW-0833">Ubl conjugation pathway</keyword>
<keyword id="KW-0862">Zinc</keyword>
<keyword id="KW-0863">Zinc-finger</keyword>
<reference key="1">
    <citation type="submission" date="2004-11" db="EMBL/GenBank/DDBJ databases">
        <authorList>
            <consortium name="The German cDNA consortium"/>
        </authorList>
    </citation>
    <scope>NUCLEOTIDE SEQUENCE [LARGE SCALE MRNA]</scope>
    <source>
        <tissue>Brain cortex</tissue>
    </source>
</reference>
<feature type="initiator methionine" description="Removed" evidence="2">
    <location>
        <position position="1"/>
    </location>
</feature>
<feature type="chain" id="PRO_0000278232" description="E3 ubiquitin-protein ligase Praja-2">
    <location>
        <begin position="2"/>
        <end position="708"/>
    </location>
</feature>
<feature type="zinc finger region" description="RING-type; atypical" evidence="4">
    <location>
        <begin position="634"/>
        <end position="675"/>
    </location>
</feature>
<feature type="region of interest" description="Disordered" evidence="5">
    <location>
        <begin position="1"/>
        <end position="30"/>
    </location>
</feature>
<feature type="region of interest" description="Disordered" evidence="5">
    <location>
        <begin position="53"/>
        <end position="90"/>
    </location>
</feature>
<feature type="region of interest" description="Disordered" evidence="5">
    <location>
        <begin position="244"/>
        <end position="342"/>
    </location>
</feature>
<feature type="region of interest" description="Disordered" evidence="5">
    <location>
        <begin position="385"/>
        <end position="411"/>
    </location>
</feature>
<feature type="region of interest" description="Disordered" evidence="5">
    <location>
        <begin position="425"/>
        <end position="495"/>
    </location>
</feature>
<feature type="region of interest" description="Interaction with PRKAR1A, PRKAR2A and PRKAR2B" evidence="1">
    <location>
        <begin position="531"/>
        <end position="708"/>
    </location>
</feature>
<feature type="region of interest" description="Mediates interaction with TBC1D31" evidence="2">
    <location>
        <begin position="550"/>
        <end position="570"/>
    </location>
</feature>
<feature type="region of interest" description="Disordered" evidence="5">
    <location>
        <begin position="685"/>
        <end position="708"/>
    </location>
</feature>
<feature type="compositionally biased region" description="Basic and acidic residues" evidence="5">
    <location>
        <begin position="1"/>
        <end position="10"/>
    </location>
</feature>
<feature type="compositionally biased region" description="Polar residues" evidence="5">
    <location>
        <begin position="74"/>
        <end position="90"/>
    </location>
</feature>
<feature type="compositionally biased region" description="Polar residues" evidence="5">
    <location>
        <begin position="249"/>
        <end position="276"/>
    </location>
</feature>
<feature type="compositionally biased region" description="Polar residues" evidence="5">
    <location>
        <begin position="322"/>
        <end position="332"/>
    </location>
</feature>
<feature type="compositionally biased region" description="Basic and acidic residues" evidence="5">
    <location>
        <begin position="333"/>
        <end position="342"/>
    </location>
</feature>
<feature type="compositionally biased region" description="Acidic residues" evidence="5">
    <location>
        <begin position="467"/>
        <end position="483"/>
    </location>
</feature>
<feature type="compositionally biased region" description="Polar residues" evidence="5">
    <location>
        <begin position="484"/>
        <end position="493"/>
    </location>
</feature>
<feature type="compositionally biased region" description="Low complexity" evidence="5">
    <location>
        <begin position="699"/>
        <end position="708"/>
    </location>
</feature>
<feature type="modified residue" description="N-acetylserine" evidence="2">
    <location>
        <position position="2"/>
    </location>
</feature>
<feature type="modified residue" description="Phosphoserine" evidence="2">
    <location>
        <position position="196"/>
    </location>
</feature>
<feature type="modified residue" description="Phosphothreonine" evidence="2">
    <location>
        <position position="246"/>
    </location>
</feature>
<feature type="modified residue" description="Phosphoserine" evidence="2">
    <location>
        <position position="253"/>
    </location>
</feature>
<feature type="modified residue" description="Phosphoserine" evidence="2">
    <location>
        <position position="309"/>
    </location>
</feature>
<feature type="modified residue" description="Phosphoserine" evidence="2">
    <location>
        <position position="323"/>
    </location>
</feature>
<feature type="modified residue" description="Phosphoserine; by PKA" evidence="2">
    <location>
        <position position="342"/>
    </location>
</feature>
<feature type="modified residue" description="Phosphothreonine; by PKA" evidence="2">
    <location>
        <position position="389"/>
    </location>
</feature>
<feature type="modified residue" description="Phosphoserine" evidence="2">
    <location>
        <position position="432"/>
    </location>
</feature>
<feature type="sequence conflict" description="In Ref. 1; CAH92828." evidence="6" ref="1">
    <original>P</original>
    <variation>Q</variation>
    <location>
        <position position="111"/>
    </location>
</feature>
<feature type="sequence conflict" description="In Ref. 1; CAH92828." evidence="6" ref="1">
    <original>T</original>
    <variation>I</variation>
    <location>
        <position position="147"/>
    </location>
</feature>
<feature type="sequence conflict" description="In Ref. 1; CAH92828." evidence="6" ref="1">
    <original>S</original>
    <variation>L</variation>
    <location>
        <position position="197"/>
    </location>
</feature>
<sequence>MSQYTEKEPAAMDQESGKAVWPKPAGGYQTITGRRYGRRHAYVSFKPCMTRHERSLGRAGDDYEVLELDDVPKENSSGSSPLDQVDSSLPNEPIFEKSETEIPTCGSALNPTTESSQSFVAVHHSEEGRDTLGSSTNLHNHSEGEYTPGACNASGVQNGIALVHTDSYDPDGKHGEDNDRLQLSAEVVEGSRYQESSGNTLFELENREAEAYTGLSPPVPSFNCEVRDEFEGLDSVPLVKSSAGDTEFVHQNSQEIQRSSQDEMVSTKQQNNTSQERQTEHSPEDSACGPGRICSEQNTNDREKNHGSSPEQVVRPKVRKLISSSQVDQETGFNRHEAKQRSVQRWREALEVEESGSDDLLIKCEEYDGEHDCMFLDPPYSRVITQRETENNQVTPESGATAGRQEVDNPFWNGCGDYYQLYDKDEDSSECSDGEWSASLPHRFSGTEKDQSSSDESWETLPGKDENEPELQSDSSGPEEENQELSLQEGEQTSLEEGEIPWLQYNEVNESSSDEGNEPANEFAQPAFMLDGNNNLEDDSSVSEDLDVDWSLFDGFADGLGVAEAISYVDPQFLTYMALEERLAQAMETALAHLESLAVDVEVANPPASKESIDGLPETLVLEDHTAIGQEQCCPICCSEYIKDDIATELPCHHFFHKPCVSIWLQKSGTCPVCRRHFPPAVIEASAAPSSEPDPDAPPSNDSIAEAP</sequence>
<accession>Q5R4R1</accession>
<accession>Q5R5Y8</accession>
<name>PJA2_PONAB</name>
<dbReference type="EC" id="2.3.2.27" evidence="2"/>
<dbReference type="EMBL" id="CR860713">
    <property type="protein sequence ID" value="CAH92828.1"/>
    <property type="molecule type" value="mRNA"/>
</dbReference>
<dbReference type="EMBL" id="CR861183">
    <property type="protein sequence ID" value="CAH93255.1"/>
    <property type="molecule type" value="mRNA"/>
</dbReference>
<dbReference type="RefSeq" id="NP_001124566.1">
    <property type="nucleotide sequence ID" value="NM_001131094.1"/>
</dbReference>
<dbReference type="SMR" id="Q5R4R1"/>
<dbReference type="FunCoup" id="Q5R4R1">
    <property type="interactions" value="1524"/>
</dbReference>
<dbReference type="STRING" id="9601.ENSPPYP00000017525"/>
<dbReference type="GeneID" id="100169739"/>
<dbReference type="KEGG" id="pon:100169739"/>
<dbReference type="CTD" id="9867"/>
<dbReference type="eggNOG" id="KOG0800">
    <property type="taxonomic scope" value="Eukaryota"/>
</dbReference>
<dbReference type="InParanoid" id="Q5R4R1"/>
<dbReference type="OrthoDB" id="21204at2759"/>
<dbReference type="UniPathway" id="UPA00143"/>
<dbReference type="Proteomes" id="UP000001595">
    <property type="component" value="Unplaced"/>
</dbReference>
<dbReference type="GO" id="GO:0005813">
    <property type="term" value="C:centrosome"/>
    <property type="evidence" value="ECO:0007669"/>
    <property type="project" value="UniProtKB-SubCell"/>
</dbReference>
<dbReference type="GO" id="GO:0005737">
    <property type="term" value="C:cytoplasm"/>
    <property type="evidence" value="ECO:0000250"/>
    <property type="project" value="UniProtKB"/>
</dbReference>
<dbReference type="GO" id="GO:0005789">
    <property type="term" value="C:endoplasmic reticulum membrane"/>
    <property type="evidence" value="ECO:0007669"/>
    <property type="project" value="UniProtKB-SubCell"/>
</dbReference>
<dbReference type="GO" id="GO:0000139">
    <property type="term" value="C:Golgi membrane"/>
    <property type="evidence" value="ECO:0007669"/>
    <property type="project" value="UniProtKB-SubCell"/>
</dbReference>
<dbReference type="GO" id="GO:0005886">
    <property type="term" value="C:plasma membrane"/>
    <property type="evidence" value="ECO:0000250"/>
    <property type="project" value="UniProtKB"/>
</dbReference>
<dbReference type="GO" id="GO:0014069">
    <property type="term" value="C:postsynaptic density"/>
    <property type="evidence" value="ECO:0007669"/>
    <property type="project" value="UniProtKB-SubCell"/>
</dbReference>
<dbReference type="GO" id="GO:0034236">
    <property type="term" value="F:protein kinase A catalytic subunit binding"/>
    <property type="evidence" value="ECO:0000250"/>
    <property type="project" value="UniProtKB"/>
</dbReference>
<dbReference type="GO" id="GO:0034237">
    <property type="term" value="F:protein kinase A regulatory subunit binding"/>
    <property type="evidence" value="ECO:0000250"/>
    <property type="project" value="UniProtKB"/>
</dbReference>
<dbReference type="GO" id="GO:0016740">
    <property type="term" value="F:transferase activity"/>
    <property type="evidence" value="ECO:0007669"/>
    <property type="project" value="UniProtKB-KW"/>
</dbReference>
<dbReference type="GO" id="GO:0008270">
    <property type="term" value="F:zinc ion binding"/>
    <property type="evidence" value="ECO:0007669"/>
    <property type="project" value="UniProtKB-KW"/>
</dbReference>
<dbReference type="GO" id="GO:0006954">
    <property type="term" value="P:inflammatory response"/>
    <property type="evidence" value="ECO:0000250"/>
    <property type="project" value="UniProtKB"/>
</dbReference>
<dbReference type="GO" id="GO:0045087">
    <property type="term" value="P:innate immune response"/>
    <property type="evidence" value="ECO:0000250"/>
    <property type="project" value="UniProtKB"/>
</dbReference>
<dbReference type="GO" id="GO:0007616">
    <property type="term" value="P:long-term memory"/>
    <property type="evidence" value="ECO:0000250"/>
    <property type="project" value="UniProtKB"/>
</dbReference>
<dbReference type="GO" id="GO:0046330">
    <property type="term" value="P:positive regulation of JNK cascade"/>
    <property type="evidence" value="ECO:0000250"/>
    <property type="project" value="UniProtKB"/>
</dbReference>
<dbReference type="GO" id="GO:1900745">
    <property type="term" value="P:positive regulation of p38MAPK cascade"/>
    <property type="evidence" value="ECO:0000250"/>
    <property type="project" value="UniProtKB"/>
</dbReference>
<dbReference type="GO" id="GO:0034137">
    <property type="term" value="P:positive regulation of toll-like receptor 2 signaling pathway"/>
    <property type="evidence" value="ECO:0000250"/>
    <property type="project" value="UniProtKB"/>
</dbReference>
<dbReference type="GO" id="GO:0016567">
    <property type="term" value="P:protein ubiquitination"/>
    <property type="evidence" value="ECO:0000250"/>
    <property type="project" value="UniProtKB"/>
</dbReference>
<dbReference type="GO" id="GO:0010738">
    <property type="term" value="P:regulation of protein kinase A signaling"/>
    <property type="evidence" value="ECO:0000250"/>
    <property type="project" value="UniProtKB"/>
</dbReference>
<dbReference type="CDD" id="cd16465">
    <property type="entry name" value="RING-H2_PJA1_2"/>
    <property type="match status" value="1"/>
</dbReference>
<dbReference type="FunFam" id="3.30.40.10:FF:000152">
    <property type="entry name" value="E3 ubiquitin-protein ligase Praja-1 isoform X1"/>
    <property type="match status" value="1"/>
</dbReference>
<dbReference type="Gene3D" id="3.30.40.10">
    <property type="entry name" value="Zinc/RING finger domain, C3HC4 (zinc finger)"/>
    <property type="match status" value="1"/>
</dbReference>
<dbReference type="InterPro" id="IPR001841">
    <property type="entry name" value="Znf_RING"/>
</dbReference>
<dbReference type="InterPro" id="IPR013083">
    <property type="entry name" value="Znf_RING/FYVE/PHD"/>
</dbReference>
<dbReference type="PANTHER" id="PTHR46151">
    <property type="entry name" value="NEP1-INTERACTING PROTEIN-LIKE 2"/>
    <property type="match status" value="1"/>
</dbReference>
<dbReference type="PANTHER" id="PTHR46151:SF18">
    <property type="entry name" value="NEP1-INTERACTING PROTEIN-LIKE 2"/>
    <property type="match status" value="1"/>
</dbReference>
<dbReference type="Pfam" id="PF13639">
    <property type="entry name" value="zf-RING_2"/>
    <property type="match status" value="1"/>
</dbReference>
<dbReference type="SMART" id="SM00184">
    <property type="entry name" value="RING"/>
    <property type="match status" value="1"/>
</dbReference>
<dbReference type="SUPFAM" id="SSF57850">
    <property type="entry name" value="RING/U-box"/>
    <property type="match status" value="1"/>
</dbReference>
<dbReference type="PROSITE" id="PS50089">
    <property type="entry name" value="ZF_RING_2"/>
    <property type="match status" value="1"/>
</dbReference>
<proteinExistence type="evidence at transcript level"/>